<proteinExistence type="evidence at protein level"/>
<protein>
    <recommendedName>
        <fullName>Chemokine XC receptor 1</fullName>
    </recommendedName>
    <alternativeName>
        <fullName>G-protein coupled receptor 5</fullName>
    </alternativeName>
    <alternativeName>
        <fullName>Lymphotactin receptor</fullName>
    </alternativeName>
    <alternativeName>
        <fullName>XC chemokine receptor 1</fullName>
    </alternativeName>
</protein>
<evidence type="ECO:0000255" key="1"/>
<evidence type="ECO:0000255" key="2">
    <source>
        <dbReference type="PROSITE-ProRule" id="PRU00521"/>
    </source>
</evidence>
<evidence type="ECO:0000305" key="3"/>
<keyword id="KW-0002">3D-structure</keyword>
<keyword id="KW-1003">Cell membrane</keyword>
<keyword id="KW-1015">Disulfide bond</keyword>
<keyword id="KW-0297">G-protein coupled receptor</keyword>
<keyword id="KW-0472">Membrane</keyword>
<keyword id="KW-1267">Proteomics identification</keyword>
<keyword id="KW-0675">Receptor</keyword>
<keyword id="KW-1185">Reference proteome</keyword>
<keyword id="KW-0807">Transducer</keyword>
<keyword id="KW-0812">Transmembrane</keyword>
<keyword id="KW-1133">Transmembrane helix</keyword>
<organism>
    <name type="scientific">Homo sapiens</name>
    <name type="common">Human</name>
    <dbReference type="NCBI Taxonomy" id="9606"/>
    <lineage>
        <taxon>Eukaryota</taxon>
        <taxon>Metazoa</taxon>
        <taxon>Chordata</taxon>
        <taxon>Craniata</taxon>
        <taxon>Vertebrata</taxon>
        <taxon>Euteleostomi</taxon>
        <taxon>Mammalia</taxon>
        <taxon>Eutheria</taxon>
        <taxon>Euarchontoglires</taxon>
        <taxon>Primates</taxon>
        <taxon>Haplorrhini</taxon>
        <taxon>Catarrhini</taxon>
        <taxon>Hominidae</taxon>
        <taxon>Homo</taxon>
    </lineage>
</organism>
<name>XCR1_HUMAN</name>
<gene>
    <name type="primary">XCR1</name>
    <name type="synonym">CCXCR1</name>
    <name type="synonym">GPR5</name>
</gene>
<accession>P46094</accession>
<reference key="1">
    <citation type="journal article" date="1995" name="DNA Cell Biol.">
        <title>Isolation of three novel human genes encoding G protein-coupled receptors.</title>
        <authorList>
            <person name="Heiber M."/>
            <person name="Docherty J.M."/>
            <person name="Shah G."/>
            <person name="Nguyen T."/>
            <person name="Cheng R."/>
            <person name="Heng H.H.Q."/>
            <person name="Marchese A."/>
            <person name="Tsui L.-C."/>
            <person name="Shi X."/>
            <person name="George S.R."/>
            <person name="O'Dowd B.F."/>
        </authorList>
    </citation>
    <scope>NUCLEOTIDE SEQUENCE [GENOMIC DNA]</scope>
</reference>
<reference key="2">
    <citation type="submission" date="2003-04" db="EMBL/GenBank/DDBJ databases">
        <title>cDNA clones of human proteins involved in signal transduction sequenced by the Guthrie cDNA resource center (www.cdna.org).</title>
        <authorList>
            <person name="Warren C.N."/>
            <person name="Aronstam R.S."/>
            <person name="Sharma S.V."/>
        </authorList>
    </citation>
    <scope>NUCLEOTIDE SEQUENCE [LARGE SCALE MRNA]</scope>
</reference>
<reference key="3">
    <citation type="journal article" date="2004" name="Genome Res.">
        <title>The status, quality, and expansion of the NIH full-length cDNA project: the Mammalian Gene Collection (MGC).</title>
        <authorList>
            <consortium name="The MGC Project Team"/>
        </authorList>
    </citation>
    <scope>NUCLEOTIDE SEQUENCE [LARGE SCALE MRNA]</scope>
</reference>
<reference key="4">
    <citation type="journal article" date="1998" name="J. Biol. Chem.">
        <title>Identification of single C motif-1/lymphotactin receptor XCR1.</title>
        <authorList>
            <person name="Yoshida T."/>
            <person name="Imai T."/>
            <person name="Kakizaki M."/>
            <person name="Nishimura M."/>
            <person name="Takagi S."/>
            <person name="Yoshie O."/>
        </authorList>
    </citation>
    <scope>CHARACTERIZATION</scope>
</reference>
<sequence>MESSGNPESTTFFYYDLQSQPCENQAWVFATLATTVLYCLVFLLSLVGNSLVLWVLVKYESLESLTNIFILNLCLSDLVFACLLPVWISPYHWGWVLGDFLCKLLNMIFSISLYSSIFFLTIMTIHRYLSVVSPLSTLRVPTLRCRVLVTMAVWVASILSSILDTIFHKVLSSGCDYSELTWYLTSVYQHNLFFLLSLGIILFCYVEILRTLFRSRSKRRHRTVKLIFAIVVAYFLSWGPYNFTLFLQTLFRTQIIRSCEAKQQLEYALLICRNLAFSHCCFNPVLYVFVGVKFRTHLKHVLRQFWFCRLQAPSPASIPHSPGAFAYEGASFY</sequence>
<comment type="function">
    <text evidence="3">Receptor for chemokines SCYC1 and SCYC2. Subsequently transduces a signal by increasing the intracellular calcium ions level. Receptor for XCL1/Lymphotactin.</text>
</comment>
<comment type="interaction">
    <interactant intactId="EBI-12960721">
        <id>P46094</id>
    </interactant>
    <interactant intactId="EBI-742388">
        <id>Q9H8W4</id>
        <label>PLEKHF2</label>
    </interactant>
    <organismsDiffer>false</organismsDiffer>
    <experiments>3</experiments>
</comment>
<comment type="subcellular location">
    <subcellularLocation>
        <location>Cell membrane</location>
        <topology>Multi-pass membrane protein</topology>
    </subcellularLocation>
</comment>
<comment type="similarity">
    <text evidence="2">Belongs to the G-protein coupled receptor 1 family.</text>
</comment>
<feature type="chain" id="PRO_0000070221" description="Chemokine XC receptor 1">
    <location>
        <begin position="1"/>
        <end position="333"/>
    </location>
</feature>
<feature type="topological domain" description="Extracellular" evidence="1">
    <location>
        <begin position="1"/>
        <end position="31"/>
    </location>
</feature>
<feature type="transmembrane region" description="Helical; Name=1" evidence="1">
    <location>
        <begin position="32"/>
        <end position="59"/>
    </location>
</feature>
<feature type="topological domain" description="Cytoplasmic" evidence="1">
    <location>
        <begin position="60"/>
        <end position="69"/>
    </location>
</feature>
<feature type="transmembrane region" description="Helical; Name=2" evidence="1">
    <location>
        <begin position="70"/>
        <end position="89"/>
    </location>
</feature>
<feature type="topological domain" description="Extracellular" evidence="1">
    <location>
        <begin position="90"/>
        <end position="103"/>
    </location>
</feature>
<feature type="transmembrane region" description="Helical; Name=3" evidence="1">
    <location>
        <begin position="104"/>
        <end position="125"/>
    </location>
</feature>
<feature type="topological domain" description="Cytoplasmic" evidence="1">
    <location>
        <begin position="126"/>
        <end position="142"/>
    </location>
</feature>
<feature type="transmembrane region" description="Helical; Name=4" evidence="1">
    <location>
        <begin position="143"/>
        <end position="167"/>
    </location>
</feature>
<feature type="topological domain" description="Extracellular" evidence="1">
    <location>
        <begin position="168"/>
        <end position="190"/>
    </location>
</feature>
<feature type="transmembrane region" description="Helical; Name=5" evidence="1">
    <location>
        <begin position="191"/>
        <end position="209"/>
    </location>
</feature>
<feature type="topological domain" description="Cytoplasmic" evidence="1">
    <location>
        <begin position="210"/>
        <end position="225"/>
    </location>
</feature>
<feature type="transmembrane region" description="Helical; Name=6" evidence="1">
    <location>
        <begin position="226"/>
        <end position="250"/>
    </location>
</feature>
<feature type="topological domain" description="Extracellular" evidence="1">
    <location>
        <begin position="251"/>
        <end position="267"/>
    </location>
</feature>
<feature type="transmembrane region" description="Helical; Name=7" evidence="1">
    <location>
        <begin position="268"/>
        <end position="291"/>
    </location>
</feature>
<feature type="topological domain" description="Cytoplasmic" evidence="1">
    <location>
        <begin position="292"/>
        <end position="333"/>
    </location>
</feature>
<feature type="disulfide bond" evidence="2">
    <location>
        <begin position="102"/>
        <end position="175"/>
    </location>
</feature>
<dbReference type="EMBL" id="L36149">
    <property type="protein sequence ID" value="AAA62837.1"/>
    <property type="molecule type" value="Genomic_DNA"/>
</dbReference>
<dbReference type="EMBL" id="AY275469">
    <property type="protein sequence ID" value="AAP32301.1"/>
    <property type="molecule type" value="Genomic_DNA"/>
</dbReference>
<dbReference type="EMBL" id="BC069075">
    <property type="protein sequence ID" value="AAH69075.1"/>
    <property type="molecule type" value="mRNA"/>
</dbReference>
<dbReference type="EMBL" id="BC069589">
    <property type="protein sequence ID" value="AAH69589.1"/>
    <property type="molecule type" value="mRNA"/>
</dbReference>
<dbReference type="CCDS" id="CCDS2736.1"/>
<dbReference type="PIR" id="I65989">
    <property type="entry name" value="I65989"/>
</dbReference>
<dbReference type="RefSeq" id="NP_001019815.1">
    <property type="nucleotide sequence ID" value="NM_001024644.2"/>
</dbReference>
<dbReference type="RefSeq" id="NP_001368789.1">
    <property type="nucleotide sequence ID" value="NM_001381860.1"/>
</dbReference>
<dbReference type="RefSeq" id="NP_005274.1">
    <property type="nucleotide sequence ID" value="NM_005283.3"/>
</dbReference>
<dbReference type="RefSeq" id="XP_016861685.1">
    <property type="nucleotide sequence ID" value="XM_017006196.1"/>
</dbReference>
<dbReference type="RefSeq" id="XP_016861686.1">
    <property type="nucleotide sequence ID" value="XM_017006197.1"/>
</dbReference>
<dbReference type="RefSeq" id="XP_016861687.1">
    <property type="nucleotide sequence ID" value="XM_017006198.1"/>
</dbReference>
<dbReference type="RefSeq" id="XP_016861688.1">
    <property type="nucleotide sequence ID" value="XM_017006199.1"/>
</dbReference>
<dbReference type="RefSeq" id="XP_016861689.1">
    <property type="nucleotide sequence ID" value="XM_017006200.1"/>
</dbReference>
<dbReference type="RefSeq" id="XP_016861690.1">
    <property type="nucleotide sequence ID" value="XM_017006201.1"/>
</dbReference>
<dbReference type="PDB" id="9AST">
    <property type="method" value="EM"/>
    <property type="resolution" value="3.07 A"/>
    <property type="chains" value="R=2-333"/>
</dbReference>
<dbReference type="PDBsum" id="9AST"/>
<dbReference type="SMR" id="P46094"/>
<dbReference type="BioGRID" id="109090">
    <property type="interactions" value="2"/>
</dbReference>
<dbReference type="FunCoup" id="P46094">
    <property type="interactions" value="839"/>
</dbReference>
<dbReference type="IntAct" id="P46094">
    <property type="interactions" value="1"/>
</dbReference>
<dbReference type="STRING" id="9606.ENSP00000310405"/>
<dbReference type="ChEMBL" id="CHEMBL4339"/>
<dbReference type="GuidetoPHARMACOLOGY" id="75"/>
<dbReference type="iPTMnet" id="P46094"/>
<dbReference type="PhosphoSitePlus" id="P46094"/>
<dbReference type="BioMuta" id="XCR1"/>
<dbReference type="DMDM" id="1170008"/>
<dbReference type="PaxDb" id="9606-ENSP00000310405"/>
<dbReference type="PeptideAtlas" id="P46094"/>
<dbReference type="Antibodypedia" id="2956">
    <property type="antibodies" value="295 antibodies from 30 providers"/>
</dbReference>
<dbReference type="DNASU" id="2829"/>
<dbReference type="Ensembl" id="ENST00000309285.4">
    <property type="protein sequence ID" value="ENSP00000310405.3"/>
    <property type="gene ID" value="ENSG00000173578.9"/>
</dbReference>
<dbReference type="Ensembl" id="ENST00000395946.3">
    <property type="protein sequence ID" value="ENSP00000379277.3"/>
    <property type="gene ID" value="ENSG00000173578.9"/>
</dbReference>
<dbReference type="Ensembl" id="ENST00000683768.1">
    <property type="protein sequence ID" value="ENSP00000507745.1"/>
    <property type="gene ID" value="ENSG00000173578.9"/>
</dbReference>
<dbReference type="GeneID" id="2829"/>
<dbReference type="KEGG" id="hsa:2829"/>
<dbReference type="MANE-Select" id="ENST00000309285.4">
    <property type="protein sequence ID" value="ENSP00000310405.3"/>
    <property type="RefSeq nucleotide sequence ID" value="NM_001024644.2"/>
    <property type="RefSeq protein sequence ID" value="NP_001019815.1"/>
</dbReference>
<dbReference type="UCSC" id="uc003cpd.2">
    <property type="organism name" value="human"/>
</dbReference>
<dbReference type="AGR" id="HGNC:1625"/>
<dbReference type="CTD" id="2829"/>
<dbReference type="DisGeNET" id="2829"/>
<dbReference type="GeneCards" id="XCR1"/>
<dbReference type="HGNC" id="HGNC:1625">
    <property type="gene designation" value="XCR1"/>
</dbReference>
<dbReference type="HPA" id="ENSG00000173578">
    <property type="expression patterns" value="Tissue enhanced (lymphoid)"/>
</dbReference>
<dbReference type="MIM" id="600552">
    <property type="type" value="gene"/>
</dbReference>
<dbReference type="neXtProt" id="NX_P46094"/>
<dbReference type="OpenTargets" id="ENSG00000173578"/>
<dbReference type="PharmGKB" id="PA35037"/>
<dbReference type="VEuPathDB" id="HostDB:ENSG00000173578"/>
<dbReference type="eggNOG" id="KOG3656">
    <property type="taxonomic scope" value="Eukaryota"/>
</dbReference>
<dbReference type="GeneTree" id="ENSGT01110000267168"/>
<dbReference type="HOGENOM" id="CLU_009579_8_3_1"/>
<dbReference type="InParanoid" id="P46094"/>
<dbReference type="OMA" id="RSHTKNR"/>
<dbReference type="OrthoDB" id="10015690at2759"/>
<dbReference type="PAN-GO" id="P46094">
    <property type="GO annotations" value="7 GO annotations based on evolutionary models"/>
</dbReference>
<dbReference type="PhylomeDB" id="P46094"/>
<dbReference type="TreeFam" id="TF330966"/>
<dbReference type="PathwayCommons" id="P46094"/>
<dbReference type="Reactome" id="R-HSA-380108">
    <property type="pathway name" value="Chemokine receptors bind chemokines"/>
</dbReference>
<dbReference type="Reactome" id="R-HSA-416476">
    <property type="pathway name" value="G alpha (q) signalling events"/>
</dbReference>
<dbReference type="SignaLink" id="P46094"/>
<dbReference type="SIGNOR" id="P46094"/>
<dbReference type="BioGRID-ORCS" id="2829">
    <property type="hits" value="5 hits in 1144 CRISPR screens"/>
</dbReference>
<dbReference type="ChiTaRS" id="XCR1">
    <property type="organism name" value="human"/>
</dbReference>
<dbReference type="GeneWiki" id="XCR1"/>
<dbReference type="GenomeRNAi" id="2829"/>
<dbReference type="Pharos" id="P46094">
    <property type="development level" value="Tbio"/>
</dbReference>
<dbReference type="PRO" id="PR:P46094"/>
<dbReference type="Proteomes" id="UP000005640">
    <property type="component" value="Chromosome 3"/>
</dbReference>
<dbReference type="RNAct" id="P46094">
    <property type="molecule type" value="protein"/>
</dbReference>
<dbReference type="Bgee" id="ENSG00000173578">
    <property type="expression patterns" value="Expressed in primordial germ cell in gonad and 96 other cell types or tissues"/>
</dbReference>
<dbReference type="ExpressionAtlas" id="P46094">
    <property type="expression patterns" value="baseline and differential"/>
</dbReference>
<dbReference type="GO" id="GO:0009897">
    <property type="term" value="C:external side of plasma membrane"/>
    <property type="evidence" value="ECO:0000318"/>
    <property type="project" value="GO_Central"/>
</dbReference>
<dbReference type="GO" id="GO:0005886">
    <property type="term" value="C:plasma membrane"/>
    <property type="evidence" value="ECO:0000304"/>
    <property type="project" value="Reactome"/>
</dbReference>
<dbReference type="GO" id="GO:0019957">
    <property type="term" value="F:C-C chemokine binding"/>
    <property type="evidence" value="ECO:0000318"/>
    <property type="project" value="GO_Central"/>
</dbReference>
<dbReference type="GO" id="GO:0016493">
    <property type="term" value="F:C-C chemokine receptor activity"/>
    <property type="evidence" value="ECO:0000318"/>
    <property type="project" value="GO_Central"/>
</dbReference>
<dbReference type="GO" id="GO:0004950">
    <property type="term" value="F:chemokine receptor activity"/>
    <property type="evidence" value="ECO:0000304"/>
    <property type="project" value="ProtInc"/>
</dbReference>
<dbReference type="GO" id="GO:0019722">
    <property type="term" value="P:calcium-mediated signaling"/>
    <property type="evidence" value="ECO:0000318"/>
    <property type="project" value="GO_Central"/>
</dbReference>
<dbReference type="GO" id="GO:0060326">
    <property type="term" value="P:cell chemotaxis"/>
    <property type="evidence" value="ECO:0000318"/>
    <property type="project" value="GO_Central"/>
</dbReference>
<dbReference type="GO" id="GO:0006935">
    <property type="term" value="P:chemotaxis"/>
    <property type="evidence" value="ECO:0000304"/>
    <property type="project" value="ProtInc"/>
</dbReference>
<dbReference type="GO" id="GO:0007186">
    <property type="term" value="P:G protein-coupled receptor signaling pathway"/>
    <property type="evidence" value="ECO:0000304"/>
    <property type="project" value="ProtInc"/>
</dbReference>
<dbReference type="GO" id="GO:0007187">
    <property type="term" value="P:G protein-coupled receptor signaling pathway, coupled to cyclic nucleotide second messenger"/>
    <property type="evidence" value="ECO:0000304"/>
    <property type="project" value="ProtInc"/>
</dbReference>
<dbReference type="GO" id="GO:0006955">
    <property type="term" value="P:immune response"/>
    <property type="evidence" value="ECO:0000318"/>
    <property type="project" value="GO_Central"/>
</dbReference>
<dbReference type="GO" id="GO:0006954">
    <property type="term" value="P:inflammatory response"/>
    <property type="evidence" value="ECO:0000304"/>
    <property type="project" value="ProtInc"/>
</dbReference>
<dbReference type="GO" id="GO:0007204">
    <property type="term" value="P:positive regulation of cytosolic calcium ion concentration"/>
    <property type="evidence" value="ECO:0000318"/>
    <property type="project" value="GO_Central"/>
</dbReference>
<dbReference type="GO" id="GO:0051209">
    <property type="term" value="P:release of sequestered calcium ion into cytosol"/>
    <property type="evidence" value="ECO:0007669"/>
    <property type="project" value="Ensembl"/>
</dbReference>
<dbReference type="CDD" id="cd15182">
    <property type="entry name" value="7tmA_XCR1"/>
    <property type="match status" value="1"/>
</dbReference>
<dbReference type="FunFam" id="1.20.1070.10:FF:000130">
    <property type="entry name" value="Chemokine (C-C motif) receptor 2"/>
    <property type="match status" value="1"/>
</dbReference>
<dbReference type="Gene3D" id="1.20.1070.10">
    <property type="entry name" value="Rhodopsin 7-helix transmembrane proteins"/>
    <property type="match status" value="1"/>
</dbReference>
<dbReference type="InterPro" id="IPR050119">
    <property type="entry name" value="CCR1-9-like"/>
</dbReference>
<dbReference type="InterPro" id="IPR005393">
    <property type="entry name" value="Chemokine_XCR1"/>
</dbReference>
<dbReference type="InterPro" id="IPR000276">
    <property type="entry name" value="GPCR_Rhodpsn"/>
</dbReference>
<dbReference type="InterPro" id="IPR017452">
    <property type="entry name" value="GPCR_Rhodpsn_7TM"/>
</dbReference>
<dbReference type="PANTHER" id="PTHR10489">
    <property type="entry name" value="CELL ADHESION MOLECULE"/>
    <property type="match status" value="1"/>
</dbReference>
<dbReference type="PANTHER" id="PTHR10489:SF730">
    <property type="entry name" value="CHEMOKINE XC RECEPTOR 1"/>
    <property type="match status" value="1"/>
</dbReference>
<dbReference type="Pfam" id="PF00001">
    <property type="entry name" value="7tm_1"/>
    <property type="match status" value="1"/>
</dbReference>
<dbReference type="PRINTS" id="PR00237">
    <property type="entry name" value="GPCRRHODOPSN"/>
</dbReference>
<dbReference type="PRINTS" id="PR01568">
    <property type="entry name" value="LYMPHOTACTNR"/>
</dbReference>
<dbReference type="SUPFAM" id="SSF81321">
    <property type="entry name" value="Family A G protein-coupled receptor-like"/>
    <property type="match status" value="1"/>
</dbReference>
<dbReference type="PROSITE" id="PS00237">
    <property type="entry name" value="G_PROTEIN_RECEP_F1_1"/>
    <property type="match status" value="1"/>
</dbReference>
<dbReference type="PROSITE" id="PS50262">
    <property type="entry name" value="G_PROTEIN_RECEP_F1_2"/>
    <property type="match status" value="1"/>
</dbReference>